<dbReference type="EMBL" id="AAFI02000026">
    <property type="protein sequence ID" value="EAL67909.1"/>
    <property type="molecule type" value="Genomic_DNA"/>
</dbReference>
<dbReference type="RefSeq" id="XP_641881.1">
    <property type="nucleotide sequence ID" value="XM_636789.1"/>
</dbReference>
<dbReference type="SMR" id="Q54XG9"/>
<dbReference type="GlyGen" id="Q54XG9">
    <property type="glycosylation" value="13 sites"/>
</dbReference>
<dbReference type="PaxDb" id="44689-DDB0304438"/>
<dbReference type="EnsemblProtists" id="EAL67909">
    <property type="protein sequence ID" value="EAL67909"/>
    <property type="gene ID" value="DDB_G0278975"/>
</dbReference>
<dbReference type="GeneID" id="8621807"/>
<dbReference type="KEGG" id="ddi:DDB_G0278975"/>
<dbReference type="dictyBase" id="DDB_G0278975"/>
<dbReference type="VEuPathDB" id="AmoebaDB:DDB_G0278975"/>
<dbReference type="eggNOG" id="ENOG502RSSR">
    <property type="taxonomic scope" value="Eukaryota"/>
</dbReference>
<dbReference type="HOGENOM" id="CLU_005143_0_0_1"/>
<dbReference type="InParanoid" id="Q54XG9"/>
<dbReference type="OMA" id="ISMTHGD"/>
<dbReference type="PhylomeDB" id="Q54XG9"/>
<dbReference type="PRO" id="PR:Q54XG9"/>
<dbReference type="Proteomes" id="UP000002195">
    <property type="component" value="Chromosome 3"/>
</dbReference>
<dbReference type="GO" id="GO:0016020">
    <property type="term" value="C:membrane"/>
    <property type="evidence" value="ECO:0007669"/>
    <property type="project" value="UniProtKB-SubCell"/>
</dbReference>
<dbReference type="InterPro" id="IPR055401">
    <property type="entry name" value="CEMIP_beta-hel_dom"/>
</dbReference>
<dbReference type="InterPro" id="IPR019316">
    <property type="entry name" value="G8_domain"/>
</dbReference>
<dbReference type="InterPro" id="IPR052334">
    <property type="entry name" value="G8_domain-comF-like"/>
</dbReference>
<dbReference type="PANTHER" id="PTHR47687:SF2">
    <property type="entry name" value="G8 DOMAIN-CONTAINING PROTEIN DDB_G0278975"/>
    <property type="match status" value="1"/>
</dbReference>
<dbReference type="PANTHER" id="PTHR47687">
    <property type="entry name" value="G8 DOMAIN-CONTAINING PROTEIN DDB_G0288475-RELATED"/>
    <property type="match status" value="1"/>
</dbReference>
<dbReference type="Pfam" id="PF24606">
    <property type="entry name" value="CEMIP_beta-hel"/>
    <property type="match status" value="1"/>
</dbReference>
<dbReference type="Pfam" id="PF10162">
    <property type="entry name" value="G8"/>
    <property type="match status" value="1"/>
</dbReference>
<dbReference type="SMART" id="SM01225">
    <property type="entry name" value="G8"/>
    <property type="match status" value="1"/>
</dbReference>
<dbReference type="PROSITE" id="PS51484">
    <property type="entry name" value="G8"/>
    <property type="match status" value="1"/>
</dbReference>
<organism>
    <name type="scientific">Dictyostelium discoideum</name>
    <name type="common">Social amoeba</name>
    <dbReference type="NCBI Taxonomy" id="44689"/>
    <lineage>
        <taxon>Eukaryota</taxon>
        <taxon>Amoebozoa</taxon>
        <taxon>Evosea</taxon>
        <taxon>Eumycetozoa</taxon>
        <taxon>Dictyostelia</taxon>
        <taxon>Dictyosteliales</taxon>
        <taxon>Dictyosteliaceae</taxon>
        <taxon>Dictyostelium</taxon>
    </lineage>
</organism>
<reference key="1">
    <citation type="journal article" date="2005" name="Nature">
        <title>The genome of the social amoeba Dictyostelium discoideum.</title>
        <authorList>
            <person name="Eichinger L."/>
            <person name="Pachebat J.A."/>
            <person name="Gloeckner G."/>
            <person name="Rajandream M.A."/>
            <person name="Sucgang R."/>
            <person name="Berriman M."/>
            <person name="Song J."/>
            <person name="Olsen R."/>
            <person name="Szafranski K."/>
            <person name="Xu Q."/>
            <person name="Tunggal B."/>
            <person name="Kummerfeld S."/>
            <person name="Madera M."/>
            <person name="Konfortov B.A."/>
            <person name="Rivero F."/>
            <person name="Bankier A.T."/>
            <person name="Lehmann R."/>
            <person name="Hamlin N."/>
            <person name="Davies R."/>
            <person name="Gaudet P."/>
            <person name="Fey P."/>
            <person name="Pilcher K."/>
            <person name="Chen G."/>
            <person name="Saunders D."/>
            <person name="Sodergren E.J."/>
            <person name="Davis P."/>
            <person name="Kerhornou A."/>
            <person name="Nie X."/>
            <person name="Hall N."/>
            <person name="Anjard C."/>
            <person name="Hemphill L."/>
            <person name="Bason N."/>
            <person name="Farbrother P."/>
            <person name="Desany B."/>
            <person name="Just E."/>
            <person name="Morio T."/>
            <person name="Rost R."/>
            <person name="Churcher C.M."/>
            <person name="Cooper J."/>
            <person name="Haydock S."/>
            <person name="van Driessche N."/>
            <person name="Cronin A."/>
            <person name="Goodhead I."/>
            <person name="Muzny D.M."/>
            <person name="Mourier T."/>
            <person name="Pain A."/>
            <person name="Lu M."/>
            <person name="Harper D."/>
            <person name="Lindsay R."/>
            <person name="Hauser H."/>
            <person name="James K.D."/>
            <person name="Quiles M."/>
            <person name="Madan Babu M."/>
            <person name="Saito T."/>
            <person name="Buchrieser C."/>
            <person name="Wardroper A."/>
            <person name="Felder M."/>
            <person name="Thangavelu M."/>
            <person name="Johnson D."/>
            <person name="Knights A."/>
            <person name="Loulseged H."/>
            <person name="Mungall K.L."/>
            <person name="Oliver K."/>
            <person name="Price C."/>
            <person name="Quail M.A."/>
            <person name="Urushihara H."/>
            <person name="Hernandez J."/>
            <person name="Rabbinowitsch E."/>
            <person name="Steffen D."/>
            <person name="Sanders M."/>
            <person name="Ma J."/>
            <person name="Kohara Y."/>
            <person name="Sharp S."/>
            <person name="Simmonds M.N."/>
            <person name="Spiegler S."/>
            <person name="Tivey A."/>
            <person name="Sugano S."/>
            <person name="White B."/>
            <person name="Walker D."/>
            <person name="Woodward J.R."/>
            <person name="Winckler T."/>
            <person name="Tanaka Y."/>
            <person name="Shaulsky G."/>
            <person name="Schleicher M."/>
            <person name="Weinstock G.M."/>
            <person name="Rosenthal A."/>
            <person name="Cox E.C."/>
            <person name="Chisholm R.L."/>
            <person name="Gibbs R.A."/>
            <person name="Loomis W.F."/>
            <person name="Platzer M."/>
            <person name="Kay R.R."/>
            <person name="Williams J.G."/>
            <person name="Dear P.H."/>
            <person name="Noegel A.A."/>
            <person name="Barrell B.G."/>
            <person name="Kuspa A."/>
        </authorList>
    </citation>
    <scope>NUCLEOTIDE SEQUENCE [LARGE SCALE GENOMIC DNA]</scope>
    <source>
        <strain>AX4</strain>
    </source>
</reference>
<accession>Q54XG9</accession>
<feature type="signal peptide" evidence="1">
    <location>
        <begin position="1"/>
        <end position="24"/>
    </location>
</feature>
<feature type="chain" id="PRO_0000393594" description="G8 domain-containing protein DDB_G0278975">
    <location>
        <begin position="25"/>
        <end position="1415"/>
    </location>
</feature>
<feature type="transmembrane region" description="Helical" evidence="1">
    <location>
        <begin position="107"/>
        <end position="127"/>
    </location>
</feature>
<feature type="transmembrane region" description="Helical" evidence="1">
    <location>
        <begin position="138"/>
        <end position="158"/>
    </location>
</feature>
<feature type="domain" description="G8" evidence="2">
    <location>
        <begin position="566"/>
        <end position="692"/>
    </location>
</feature>
<feature type="repeat" description="PbH1 1">
    <location>
        <begin position="819"/>
        <end position="841"/>
    </location>
</feature>
<feature type="repeat" description="PbH1 2">
    <location>
        <begin position="842"/>
        <end position="864"/>
    </location>
</feature>
<feature type="glycosylation site" description="N-linked (GlcNAc...) asparagine" evidence="1">
    <location>
        <position position="245"/>
    </location>
</feature>
<feature type="glycosylation site" description="N-linked (GlcNAc...) asparagine" evidence="1">
    <location>
        <position position="366"/>
    </location>
</feature>
<feature type="glycosylation site" description="N-linked (GlcNAc...) asparagine" evidence="1">
    <location>
        <position position="428"/>
    </location>
</feature>
<feature type="glycosylation site" description="N-linked (GlcNAc...) asparagine" evidence="1">
    <location>
        <position position="466"/>
    </location>
</feature>
<feature type="glycosylation site" description="N-linked (GlcNAc...) asparagine" evidence="1">
    <location>
        <position position="579"/>
    </location>
</feature>
<feature type="glycosylation site" description="N-linked (GlcNAc...) asparagine" evidence="1">
    <location>
        <position position="844"/>
    </location>
</feature>
<feature type="glycosylation site" description="N-linked (GlcNAc...) asparagine" evidence="1">
    <location>
        <position position="985"/>
    </location>
</feature>
<feature type="glycosylation site" description="N-linked (GlcNAc...) asparagine" evidence="1">
    <location>
        <position position="1009"/>
    </location>
</feature>
<feature type="glycosylation site" description="N-linked (GlcNAc...) asparagine" evidence="1">
    <location>
        <position position="1023"/>
    </location>
</feature>
<feature type="glycosylation site" description="N-linked (GlcNAc...) asparagine" evidence="1">
    <location>
        <position position="1099"/>
    </location>
</feature>
<feature type="glycosylation site" description="N-linked (GlcNAc...) asparagine" evidence="1">
    <location>
        <position position="1244"/>
    </location>
</feature>
<feature type="glycosylation site" description="N-linked (GlcNAc...) asparagine" evidence="1">
    <location>
        <position position="1342"/>
    </location>
</feature>
<keyword id="KW-0325">Glycoprotein</keyword>
<keyword id="KW-0472">Membrane</keyword>
<keyword id="KW-1185">Reference proteome</keyword>
<keyword id="KW-0677">Repeat</keyword>
<keyword id="KW-0732">Signal</keyword>
<keyword id="KW-0812">Transmembrane</keyword>
<keyword id="KW-1133">Transmembrane helix</keyword>
<comment type="subcellular location">
    <subcellularLocation>
        <location evidence="3">Membrane</location>
        <topology evidence="3">Multi-pass membrane protein</topology>
    </subcellularLocation>
</comment>
<comment type="similarity">
    <text evidence="3">Belongs to the comF family.</text>
</comment>
<evidence type="ECO:0000255" key="1"/>
<evidence type="ECO:0000255" key="2">
    <source>
        <dbReference type="PROSITE-ProRule" id="PRU00817"/>
    </source>
</evidence>
<evidence type="ECO:0000305" key="3"/>
<protein>
    <recommendedName>
        <fullName>G8 domain-containing protein DDB_G0278975</fullName>
    </recommendedName>
</protein>
<name>Y7897_DICDI</name>
<proteinExistence type="inferred from homology"/>
<gene>
    <name type="ORF">DDB_G0278975</name>
</gene>
<sequence>MKINKIILFFFLSCLYLFSSSVSAQQLLGEIEITEKSFTIDASVINTKINYLIDNTITKPKLSVTSIFGEATSIDDILRISDDKKSLTFGDYTSSTLSSSNKLVSKINLNSLILISFSTIITFGLFTKNNPRSSSKPLLFIVLLICISIFNLSNSIKISEVSVRIDIKVPSTFKFDSLILTLGSGSSIINGLIASSLKIDGCTTNSKDHSIELNQISISSELNICSTKEININEIQLTSTNVKLNLTSSSNVNLDFHNGYSGSFSINTNDLTLDSACETFKDSNTGIIIGTCNGGSDNSKLSITAITGKTVVSNAEITCPIDNSWRVTVGADNVPPSPSIITSQPATDFIFKKNDLVYMAQYGYSNQSITDGPVENSFIVSYPAYIPPSNFLVSKIIGSPTFKANVKYQFSISVKLGQPLGSFNRIQNMSLYFFNPRDITDPINGASQYYELKDTIPLFVHTFEGNFTSNTEFALTKIEFTPTVDIGTSIFGLRIFRTGFTGGDVVTVIIKDMKFTILPKTITQPTLLIKDSELVNLPKPSTSFDPQDSSTCPYLANDLVHWHNPSTWPNGIIPSPSSNITLPEGKKVLISPCSISQTQVYKWIKVPSTSELIFADSPMDFHVKDIYVEGKFIMGTTKCRYNSKINIIFHGEKTLSDTISQYYGSKGIGVSSSGFISVHAKQYHNTWSKLSASAWSGDYVVYIQDNVNWEVGQKVVVITSYYQDEDNNQNEVMTIAAIQGKTIQFTEPLKFFHYGGQEYQAEIALLTRRITFQSSDVNQFGGHVMVMGEGQFAGLGLIGMGQRNIKARYPLHYHLGKVLKNSYISDCSVTNSYYRCYTIHGTNNVTLTRNVAFDVSGHCYYLEDGVEMDNTISFNLAAYVHPIGRPAAGPSQIGEVFVESDNLRQPADCAASGYYITNAWNKIIGNTASGGWAGYAFPNLDKPIGNHRTVQMIPKAYSTKVFEGNTGHSSGHFFITGATIYVGANLTYNEVDGLLYYDSGRFERFTYKNGTVVYGNEVPMRFNNTKIYLSNFGIGHWGEYVEVVSYESHDNIRSASIFGEAWLSKAIVNGNSNNIARSINFNKQGFQYYDTYVKTVLSNISFRNYIRNPKSLNDEDDNRAIISMTHGDVFKPQGISTARAISFVNVAKSQIVGHQVLPTSGSRYFNFIDWDSSITGKKPGQPALVGSHELWYKFDNTCEYNSDWTCHICEKGNKEIANIQFIIPGLIDDGVLVYDSFENLNVGNISLFGSGITERRSTIVTKNQGVTGVSNMGWYLYLKAGSPKYMKIWLSQVVYGQHIFLALPYPTQTTFIIKSNYIWGSAINYNHVFSLASSAADVRSGNGTKYYFDGNFLYVKLVNLVLTGDPSEYYERDGVKVYWVRNSFSVSIEATNTVTPPTSDGFFKNLPDNLPSSSL</sequence>